<evidence type="ECO:0000250" key="1"/>
<evidence type="ECO:0000256" key="2">
    <source>
        <dbReference type="SAM" id="MobiDB-lite"/>
    </source>
</evidence>
<evidence type="ECO:0000305" key="3"/>
<feature type="chain" id="PRO_0000157679" description="Large ribosomal subunit protein P2">
    <location>
        <begin position="1"/>
        <end position="111"/>
    </location>
</feature>
<feature type="region of interest" description="Disordered" evidence="2">
    <location>
        <begin position="62"/>
        <end position="111"/>
    </location>
</feature>
<feature type="compositionally biased region" description="Low complexity" evidence="2">
    <location>
        <begin position="76"/>
        <end position="88"/>
    </location>
</feature>
<feature type="modified residue" description="Phosphoserine" evidence="1">
    <location>
        <position position="101"/>
    </location>
</feature>
<comment type="function">
    <text evidence="1">Plays an important role in the elongation step of protein synthesis.</text>
</comment>
<comment type="subunit">
    <text>P1 and P2 exist as dimers at the large ribosomal subunit.</text>
</comment>
<comment type="similarity">
    <text evidence="3">Belongs to the eukaryotic ribosomal protein P1/P2 family.</text>
</comment>
<proteinExistence type="inferred from homology"/>
<organism>
    <name type="scientific">Podospora anserina</name>
    <name type="common">Pleurage anserina</name>
    <dbReference type="NCBI Taxonomy" id="2587412"/>
    <lineage>
        <taxon>Eukaryota</taxon>
        <taxon>Fungi</taxon>
        <taxon>Dikarya</taxon>
        <taxon>Ascomycota</taxon>
        <taxon>Pezizomycotina</taxon>
        <taxon>Sordariomycetes</taxon>
        <taxon>Sordariomycetidae</taxon>
        <taxon>Sordariales</taxon>
        <taxon>Podosporaceae</taxon>
        <taxon>Podospora</taxon>
    </lineage>
</organism>
<sequence length="111" mass="10975">MKHLAAYLLLTLGGKATPSAADVKAVLESVGIEADSDRLDKLISELEGKDVNELIAEGSSKLASVPSGGAGGAAAAGGAAAAGGAAEAAPEEAKEEEKEESDDDMGFGLFD</sequence>
<dbReference type="EMBL" id="AF331715">
    <property type="protein sequence ID" value="AAK11263.1"/>
    <property type="molecule type" value="Genomic_DNA"/>
</dbReference>
<dbReference type="SMR" id="Q9C3Z5"/>
<dbReference type="VEuPathDB" id="FungiDB:PODANS_1_16600"/>
<dbReference type="GO" id="GO:0022625">
    <property type="term" value="C:cytosolic large ribosomal subunit"/>
    <property type="evidence" value="ECO:0007669"/>
    <property type="project" value="InterPro"/>
</dbReference>
<dbReference type="GO" id="GO:0003735">
    <property type="term" value="F:structural constituent of ribosome"/>
    <property type="evidence" value="ECO:0007669"/>
    <property type="project" value="InterPro"/>
</dbReference>
<dbReference type="GO" id="GO:0002182">
    <property type="term" value="P:cytoplasmic translational elongation"/>
    <property type="evidence" value="ECO:0007669"/>
    <property type="project" value="InterPro"/>
</dbReference>
<dbReference type="CDD" id="cd05833">
    <property type="entry name" value="Ribosomal_P2"/>
    <property type="match status" value="1"/>
</dbReference>
<dbReference type="FunFam" id="1.10.10.1410:FF:000002">
    <property type="entry name" value="60S acidic ribosomal protein P2"/>
    <property type="match status" value="1"/>
</dbReference>
<dbReference type="Gene3D" id="1.10.10.1410">
    <property type="match status" value="1"/>
</dbReference>
<dbReference type="HAMAP" id="MF_01478">
    <property type="entry name" value="Ribosomal_L12_arch"/>
    <property type="match status" value="1"/>
</dbReference>
<dbReference type="InterPro" id="IPR038716">
    <property type="entry name" value="P1/P2_N_sf"/>
</dbReference>
<dbReference type="InterPro" id="IPR027534">
    <property type="entry name" value="Ribosomal_P1/P2"/>
</dbReference>
<dbReference type="InterPro" id="IPR001859">
    <property type="entry name" value="Ribosomal_P1/P2_euk"/>
</dbReference>
<dbReference type="InterPro" id="IPR044076">
    <property type="entry name" value="Ribosomal_P2"/>
</dbReference>
<dbReference type="PANTHER" id="PTHR21141">
    <property type="entry name" value="60S ACIDIC RIBOSOMAL PROTEIN FAMILY MEMBER"/>
    <property type="match status" value="1"/>
</dbReference>
<dbReference type="PANTHER" id="PTHR21141:SF5">
    <property type="entry name" value="LARGE RIBOSOMAL SUBUNIT PROTEIN P2"/>
    <property type="match status" value="1"/>
</dbReference>
<dbReference type="Pfam" id="PF00428">
    <property type="entry name" value="Ribosomal_60s"/>
    <property type="match status" value="1"/>
</dbReference>
<dbReference type="PRINTS" id="PR00456">
    <property type="entry name" value="RIBOSOMALP2"/>
</dbReference>
<accession>Q9C3Z5</accession>
<protein>
    <recommendedName>
        <fullName evidence="3">Large ribosomal subunit protein P2</fullName>
    </recommendedName>
    <alternativeName>
        <fullName>60S acidic ribosomal protein P2</fullName>
    </alternativeName>
</protein>
<name>RLA2_PODAS</name>
<keyword id="KW-0597">Phosphoprotein</keyword>
<keyword id="KW-0687">Ribonucleoprotein</keyword>
<keyword id="KW-0689">Ribosomal protein</keyword>
<reference key="1">
    <citation type="submission" date="2000-12" db="EMBL/GenBank/DDBJ databases">
        <title>Ribosomal proteins of Podospora anserina.</title>
        <authorList>
            <person name="Vierny C."/>
            <person name="Folichon M."/>
            <person name="Silar P."/>
        </authorList>
    </citation>
    <scope>NUCLEOTIDE SEQUENCE [GENOMIC DNA]</scope>
</reference>